<proteinExistence type="inferred from homology"/>
<protein>
    <recommendedName>
        <fullName evidence="1">3-dehydroquinate dehydratase</fullName>
        <shortName evidence="1">3-dehydroquinase</shortName>
        <ecNumber evidence="1">4.2.1.10</ecNumber>
    </recommendedName>
    <alternativeName>
        <fullName evidence="1">Type II DHQase</fullName>
    </alternativeName>
</protein>
<organism>
    <name type="scientific">Shewanella sp. (strain W3-18-1)</name>
    <dbReference type="NCBI Taxonomy" id="351745"/>
    <lineage>
        <taxon>Bacteria</taxon>
        <taxon>Pseudomonadati</taxon>
        <taxon>Pseudomonadota</taxon>
        <taxon>Gammaproteobacteria</taxon>
        <taxon>Alteromonadales</taxon>
        <taxon>Shewanellaceae</taxon>
        <taxon>Shewanella</taxon>
    </lineage>
</organism>
<reference key="1">
    <citation type="submission" date="2006-12" db="EMBL/GenBank/DDBJ databases">
        <title>Complete sequence of Shewanella sp. W3-18-1.</title>
        <authorList>
            <consortium name="US DOE Joint Genome Institute"/>
            <person name="Copeland A."/>
            <person name="Lucas S."/>
            <person name="Lapidus A."/>
            <person name="Barry K."/>
            <person name="Detter J.C."/>
            <person name="Glavina del Rio T."/>
            <person name="Hammon N."/>
            <person name="Israni S."/>
            <person name="Dalin E."/>
            <person name="Tice H."/>
            <person name="Pitluck S."/>
            <person name="Chain P."/>
            <person name="Malfatti S."/>
            <person name="Shin M."/>
            <person name="Vergez L."/>
            <person name="Schmutz J."/>
            <person name="Larimer F."/>
            <person name="Land M."/>
            <person name="Hauser L."/>
            <person name="Kyrpides N."/>
            <person name="Lykidis A."/>
            <person name="Tiedje J."/>
            <person name="Richardson P."/>
        </authorList>
    </citation>
    <scope>NUCLEOTIDE SEQUENCE [LARGE SCALE GENOMIC DNA]</scope>
    <source>
        <strain>W3-18-1</strain>
    </source>
</reference>
<accession>A1RFJ9</accession>
<evidence type="ECO:0000255" key="1">
    <source>
        <dbReference type="HAMAP-Rule" id="MF_00169"/>
    </source>
</evidence>
<keyword id="KW-0028">Amino-acid biosynthesis</keyword>
<keyword id="KW-0057">Aromatic amino acid biosynthesis</keyword>
<keyword id="KW-0456">Lyase</keyword>
<comment type="function">
    <text evidence="1">Catalyzes a trans-dehydration via an enolate intermediate.</text>
</comment>
<comment type="catalytic activity">
    <reaction evidence="1">
        <text>3-dehydroquinate = 3-dehydroshikimate + H2O</text>
        <dbReference type="Rhea" id="RHEA:21096"/>
        <dbReference type="ChEBI" id="CHEBI:15377"/>
        <dbReference type="ChEBI" id="CHEBI:16630"/>
        <dbReference type="ChEBI" id="CHEBI:32364"/>
        <dbReference type="EC" id="4.2.1.10"/>
    </reaction>
</comment>
<comment type="pathway">
    <text evidence="1">Metabolic intermediate biosynthesis; chorismate biosynthesis; chorismate from D-erythrose 4-phosphate and phosphoenolpyruvate: step 3/7.</text>
</comment>
<comment type="subunit">
    <text evidence="1">Homododecamer.</text>
</comment>
<comment type="similarity">
    <text evidence="1">Belongs to the type-II 3-dehydroquinase family.</text>
</comment>
<name>AROQ_SHESW</name>
<dbReference type="EC" id="4.2.1.10" evidence="1"/>
<dbReference type="EMBL" id="CP000503">
    <property type="protein sequence ID" value="ABM23444.1"/>
    <property type="molecule type" value="Genomic_DNA"/>
</dbReference>
<dbReference type="RefSeq" id="WP_011787976.1">
    <property type="nucleotide sequence ID" value="NC_008750.1"/>
</dbReference>
<dbReference type="SMR" id="A1RFJ9"/>
<dbReference type="KEGG" id="shw:Sputw3181_0593"/>
<dbReference type="HOGENOM" id="CLU_090968_1_0_6"/>
<dbReference type="UniPathway" id="UPA00053">
    <property type="reaction ID" value="UER00086"/>
</dbReference>
<dbReference type="Proteomes" id="UP000002597">
    <property type="component" value="Chromosome"/>
</dbReference>
<dbReference type="GO" id="GO:0003855">
    <property type="term" value="F:3-dehydroquinate dehydratase activity"/>
    <property type="evidence" value="ECO:0007669"/>
    <property type="project" value="UniProtKB-UniRule"/>
</dbReference>
<dbReference type="GO" id="GO:0008652">
    <property type="term" value="P:amino acid biosynthetic process"/>
    <property type="evidence" value="ECO:0007669"/>
    <property type="project" value="UniProtKB-KW"/>
</dbReference>
<dbReference type="GO" id="GO:0009073">
    <property type="term" value="P:aromatic amino acid family biosynthetic process"/>
    <property type="evidence" value="ECO:0007669"/>
    <property type="project" value="UniProtKB-KW"/>
</dbReference>
<dbReference type="GO" id="GO:0009423">
    <property type="term" value="P:chorismate biosynthetic process"/>
    <property type="evidence" value="ECO:0007669"/>
    <property type="project" value="UniProtKB-UniRule"/>
</dbReference>
<dbReference type="GO" id="GO:0019631">
    <property type="term" value="P:quinate catabolic process"/>
    <property type="evidence" value="ECO:0007669"/>
    <property type="project" value="TreeGrafter"/>
</dbReference>
<dbReference type="CDD" id="cd00466">
    <property type="entry name" value="DHQase_II"/>
    <property type="match status" value="1"/>
</dbReference>
<dbReference type="Gene3D" id="3.40.50.9100">
    <property type="entry name" value="Dehydroquinase, class II"/>
    <property type="match status" value="1"/>
</dbReference>
<dbReference type="HAMAP" id="MF_00169">
    <property type="entry name" value="AroQ"/>
    <property type="match status" value="1"/>
</dbReference>
<dbReference type="InterPro" id="IPR001874">
    <property type="entry name" value="DHquinase_II"/>
</dbReference>
<dbReference type="InterPro" id="IPR018509">
    <property type="entry name" value="DHquinase_II_CS"/>
</dbReference>
<dbReference type="InterPro" id="IPR036441">
    <property type="entry name" value="DHquinase_II_sf"/>
</dbReference>
<dbReference type="NCBIfam" id="TIGR01088">
    <property type="entry name" value="aroQ"/>
    <property type="match status" value="1"/>
</dbReference>
<dbReference type="NCBIfam" id="NF003804">
    <property type="entry name" value="PRK05395.1-1"/>
    <property type="match status" value="1"/>
</dbReference>
<dbReference type="NCBIfam" id="NF003805">
    <property type="entry name" value="PRK05395.1-2"/>
    <property type="match status" value="1"/>
</dbReference>
<dbReference type="NCBIfam" id="NF003806">
    <property type="entry name" value="PRK05395.1-3"/>
    <property type="match status" value="1"/>
</dbReference>
<dbReference type="NCBIfam" id="NF003807">
    <property type="entry name" value="PRK05395.1-4"/>
    <property type="match status" value="1"/>
</dbReference>
<dbReference type="PANTHER" id="PTHR21272">
    <property type="entry name" value="CATABOLIC 3-DEHYDROQUINASE"/>
    <property type="match status" value="1"/>
</dbReference>
<dbReference type="PANTHER" id="PTHR21272:SF3">
    <property type="entry name" value="CATABOLIC 3-DEHYDROQUINASE"/>
    <property type="match status" value="1"/>
</dbReference>
<dbReference type="Pfam" id="PF01220">
    <property type="entry name" value="DHquinase_II"/>
    <property type="match status" value="1"/>
</dbReference>
<dbReference type="PIRSF" id="PIRSF001399">
    <property type="entry name" value="DHquinase_II"/>
    <property type="match status" value="1"/>
</dbReference>
<dbReference type="SUPFAM" id="SSF52304">
    <property type="entry name" value="Type II 3-dehydroquinate dehydratase"/>
    <property type="match status" value="1"/>
</dbReference>
<dbReference type="PROSITE" id="PS01029">
    <property type="entry name" value="DEHYDROQUINASE_II"/>
    <property type="match status" value="1"/>
</dbReference>
<sequence>MSHKILLVNGPNLNLLGRREPSVYGHQTLADIVATLNQQAQQAGVELEHIQSNAEFELINAIHATDAQMIIINPAAFTHTSVALRDAMLGVAIPFFEVHLSNVHAREAFRHHSYFSDKAIGVICGFGAQGYEFALSAAIKQLKG</sequence>
<gene>
    <name evidence="1" type="primary">aroQ</name>
    <name type="ordered locus">Sputw3181_0593</name>
</gene>
<feature type="chain" id="PRO_1000023517" description="3-dehydroquinate dehydratase">
    <location>
        <begin position="1"/>
        <end position="144"/>
    </location>
</feature>
<feature type="active site" description="Proton acceptor" evidence="1">
    <location>
        <position position="24"/>
    </location>
</feature>
<feature type="active site" description="Proton donor" evidence="1">
    <location>
        <position position="99"/>
    </location>
</feature>
<feature type="binding site" evidence="1">
    <location>
        <position position="73"/>
    </location>
    <ligand>
        <name>substrate</name>
    </ligand>
</feature>
<feature type="binding site" evidence="1">
    <location>
        <position position="79"/>
    </location>
    <ligand>
        <name>substrate</name>
    </ligand>
</feature>
<feature type="binding site" evidence="1">
    <location>
        <position position="86"/>
    </location>
    <ligand>
        <name>substrate</name>
    </ligand>
</feature>
<feature type="binding site" evidence="1">
    <location>
        <begin position="100"/>
        <end position="101"/>
    </location>
    <ligand>
        <name>substrate</name>
    </ligand>
</feature>
<feature type="binding site" evidence="1">
    <location>
        <position position="110"/>
    </location>
    <ligand>
        <name>substrate</name>
    </ligand>
</feature>
<feature type="site" description="Transition state stabilizer" evidence="1">
    <location>
        <position position="19"/>
    </location>
</feature>